<name>BXB2_BOMMO</name>
<evidence type="ECO:0000250" key="1"/>
<evidence type="ECO:0000255" key="2"/>
<evidence type="ECO:0000305" key="3"/>
<reference key="1">
    <citation type="journal article" date="1989" name="Proc. Natl. Acad. Sci. U.S.A.">
        <title>Structure and organization of four clustered genes that encode bombyxin, an insulin-related brain secretory peptide of the silkmoth Bombyx mori.</title>
        <authorList>
            <person name="Kawakami A."/>
            <person name="Iwami M."/>
            <person name="Nagasawa H."/>
            <person name="Suzuki A."/>
            <person name="Ishizaki H."/>
        </authorList>
    </citation>
    <scope>NUCLEOTIDE SEQUENCE [GENOMIC DNA]</scope>
</reference>
<proteinExistence type="inferred from homology"/>
<keyword id="KW-0165">Cleavage on pair of basic residues</keyword>
<keyword id="KW-1015">Disulfide bond</keyword>
<keyword id="KW-0372">Hormone</keyword>
<keyword id="KW-1185">Reference proteome</keyword>
<keyword id="KW-0964">Secreted</keyword>
<keyword id="KW-0732">Signal</keyword>
<protein>
    <recommendedName>
        <fullName>Bombyxin B-2</fullName>
        <shortName>BBX-B2</shortName>
    </recommendedName>
    <alternativeName>
        <fullName>4K-prothoracicotropic hormone</fullName>
        <shortName>4K-PTTH</shortName>
    </alternativeName>
    <component>
        <recommendedName>
            <fullName>Bombyxin B-2 B chain</fullName>
        </recommendedName>
    </component>
    <component>
        <recommendedName>
            <fullName>Bombyxin B-2 A chain</fullName>
        </recommendedName>
    </component>
</protein>
<sequence>MKTSVMFMLVFVISLMCSSEAQEVARTYCGRHLADTLADLCFGVEKRSGAQYAPYFWTRQYLGSRGKRGVVDECCFRPCTLDVLLSYCG</sequence>
<comment type="function">
    <text>Brain peptide responsible for activation of prothoracic glands to produce ecdysone in insects.</text>
</comment>
<comment type="subunit">
    <text>Heterodimer of a B chain and an A chain linked by two disulfide bonds.</text>
</comment>
<comment type="subcellular location">
    <subcellularLocation>
        <location>Secreted</location>
    </subcellularLocation>
</comment>
<comment type="miscellaneous">
    <text>Silk worm has two kinds of PTTH: 4K-PTTH and 22K-PTTH; there are many forms of 4K-PTTH.</text>
</comment>
<comment type="similarity">
    <text evidence="3">Belongs to the insulin family.</text>
</comment>
<comment type="sequence caution" evidence="3">
    <conflict type="erroneous initiation">
        <sequence resource="EMBL-CDS" id="AAA27826"/>
    </conflict>
</comment>
<organism>
    <name type="scientific">Bombyx mori</name>
    <name type="common">Silk moth</name>
    <dbReference type="NCBI Taxonomy" id="7091"/>
    <lineage>
        <taxon>Eukaryota</taxon>
        <taxon>Metazoa</taxon>
        <taxon>Ecdysozoa</taxon>
        <taxon>Arthropoda</taxon>
        <taxon>Hexapoda</taxon>
        <taxon>Insecta</taxon>
        <taxon>Pterygota</taxon>
        <taxon>Neoptera</taxon>
        <taxon>Endopterygota</taxon>
        <taxon>Lepidoptera</taxon>
        <taxon>Glossata</taxon>
        <taxon>Ditrysia</taxon>
        <taxon>Bombycoidea</taxon>
        <taxon>Bombycidae</taxon>
        <taxon>Bombycinae</taxon>
        <taxon>Bombyx</taxon>
    </lineage>
</organism>
<accession>P26734</accession>
<feature type="signal peptide" evidence="2">
    <location>
        <begin position="1"/>
        <end position="19"/>
    </location>
</feature>
<feature type="peptide" id="PRO_0000015992" description="Bombyxin B-2 B chain">
    <location>
        <begin position="20"/>
        <end position="45"/>
    </location>
</feature>
<feature type="propeptide" id="PRO_0000015993" description="C peptide like">
    <location>
        <begin position="48"/>
        <end position="66"/>
    </location>
</feature>
<feature type="peptide" id="PRO_0000015994" description="Bombyxin B-2 A chain">
    <location>
        <begin position="69"/>
        <end position="89"/>
    </location>
</feature>
<feature type="disulfide bond" description="Interchain (between B and A chains)" evidence="1">
    <location>
        <begin position="29"/>
        <end position="75"/>
    </location>
</feature>
<feature type="disulfide bond" description="Interchain (between B and A chains)" evidence="1">
    <location>
        <begin position="41"/>
        <end position="88"/>
    </location>
</feature>
<feature type="disulfide bond" evidence="1">
    <location>
        <begin position="74"/>
        <end position="79"/>
    </location>
</feature>
<dbReference type="EMBL" id="M26069">
    <property type="protein sequence ID" value="AAA27826.1"/>
    <property type="status" value="ALT_INIT"/>
    <property type="molecule type" value="Genomic_DNA"/>
</dbReference>
<dbReference type="PIR" id="D41391">
    <property type="entry name" value="IPMTB2"/>
</dbReference>
<dbReference type="RefSeq" id="NP_001121793.1">
    <property type="nucleotide sequence ID" value="NM_001128321.1"/>
</dbReference>
<dbReference type="SMR" id="P26734"/>
<dbReference type="FunCoup" id="P26734">
    <property type="interactions" value="162"/>
</dbReference>
<dbReference type="GeneID" id="100169721"/>
<dbReference type="KEGG" id="bmor:100169721"/>
<dbReference type="CTD" id="100169721"/>
<dbReference type="HOGENOM" id="CLU_125164_2_0_1"/>
<dbReference type="InParanoid" id="P26734"/>
<dbReference type="OrthoDB" id="493443at7088"/>
<dbReference type="Proteomes" id="UP000005204">
    <property type="component" value="Unassembled WGS sequence"/>
</dbReference>
<dbReference type="GO" id="GO:0005615">
    <property type="term" value="C:extracellular space"/>
    <property type="evidence" value="ECO:0007669"/>
    <property type="project" value="InterPro"/>
</dbReference>
<dbReference type="GO" id="GO:0008083">
    <property type="term" value="F:growth factor activity"/>
    <property type="evidence" value="ECO:0007669"/>
    <property type="project" value="InterPro"/>
</dbReference>
<dbReference type="GO" id="GO:0005179">
    <property type="term" value="F:hormone activity"/>
    <property type="evidence" value="ECO:0007669"/>
    <property type="project" value="UniProtKB-KW"/>
</dbReference>
<dbReference type="GO" id="GO:0005159">
    <property type="term" value="F:insulin-like growth factor receptor binding"/>
    <property type="evidence" value="ECO:0007669"/>
    <property type="project" value="TreeGrafter"/>
</dbReference>
<dbReference type="GO" id="GO:0043539">
    <property type="term" value="F:protein serine/threonine kinase activator activity"/>
    <property type="evidence" value="ECO:0007669"/>
    <property type="project" value="TreeGrafter"/>
</dbReference>
<dbReference type="GO" id="GO:0042104">
    <property type="term" value="P:positive regulation of activated T cell proliferation"/>
    <property type="evidence" value="ECO:0007669"/>
    <property type="project" value="TreeGrafter"/>
</dbReference>
<dbReference type="GO" id="GO:0046628">
    <property type="term" value="P:positive regulation of insulin receptor signaling pathway"/>
    <property type="evidence" value="ECO:0007669"/>
    <property type="project" value="TreeGrafter"/>
</dbReference>
<dbReference type="GO" id="GO:0043410">
    <property type="term" value="P:positive regulation of MAPK cascade"/>
    <property type="evidence" value="ECO:0007669"/>
    <property type="project" value="TreeGrafter"/>
</dbReference>
<dbReference type="GO" id="GO:0045944">
    <property type="term" value="P:positive regulation of transcription by RNA polymerase II"/>
    <property type="evidence" value="ECO:0007669"/>
    <property type="project" value="TreeGrafter"/>
</dbReference>
<dbReference type="GO" id="GO:1905564">
    <property type="term" value="P:positive regulation of vascular endothelial cell proliferation"/>
    <property type="evidence" value="ECO:0007669"/>
    <property type="project" value="TreeGrafter"/>
</dbReference>
<dbReference type="GO" id="GO:0051147">
    <property type="term" value="P:regulation of muscle cell differentiation"/>
    <property type="evidence" value="ECO:0007669"/>
    <property type="project" value="TreeGrafter"/>
</dbReference>
<dbReference type="CDD" id="cd04366">
    <property type="entry name" value="IlGF_insulin_bombyxin_like"/>
    <property type="match status" value="1"/>
</dbReference>
<dbReference type="Gene3D" id="1.10.100.10">
    <property type="entry name" value="Insulin-like"/>
    <property type="match status" value="1"/>
</dbReference>
<dbReference type="InterPro" id="IPR017097">
    <property type="entry name" value="Bombyxin"/>
</dbReference>
<dbReference type="InterPro" id="IPR027285">
    <property type="entry name" value="Bombyxin_B"/>
</dbReference>
<dbReference type="InterPro" id="IPR016179">
    <property type="entry name" value="Insulin-like"/>
</dbReference>
<dbReference type="InterPro" id="IPR036438">
    <property type="entry name" value="Insulin-like_sf"/>
</dbReference>
<dbReference type="InterPro" id="IPR022353">
    <property type="entry name" value="Insulin_CS"/>
</dbReference>
<dbReference type="InterPro" id="IPR022352">
    <property type="entry name" value="Insulin_family"/>
</dbReference>
<dbReference type="PANTHER" id="PTHR46886">
    <property type="entry name" value="INSULIN-LIKE GROWTH FACTOR II"/>
    <property type="match status" value="1"/>
</dbReference>
<dbReference type="PANTHER" id="PTHR46886:SF1">
    <property type="entry name" value="INSULIN-LIKE GROWTH FACTOR II"/>
    <property type="match status" value="1"/>
</dbReference>
<dbReference type="Pfam" id="PF00049">
    <property type="entry name" value="Insulin"/>
    <property type="match status" value="1"/>
</dbReference>
<dbReference type="PIRSF" id="PIRSF037038">
    <property type="entry name" value="Bombyxin"/>
    <property type="match status" value="1"/>
</dbReference>
<dbReference type="PIRSF" id="PIRSF500313">
    <property type="entry name" value="Bombyxin_B"/>
    <property type="match status" value="1"/>
</dbReference>
<dbReference type="PRINTS" id="PR02003">
    <property type="entry name" value="BOMBYXIN"/>
</dbReference>
<dbReference type="PRINTS" id="PR00276">
    <property type="entry name" value="INSULINFAMLY"/>
</dbReference>
<dbReference type="SMART" id="SM00078">
    <property type="entry name" value="IlGF"/>
    <property type="match status" value="1"/>
</dbReference>
<dbReference type="SUPFAM" id="SSF56994">
    <property type="entry name" value="Insulin-like"/>
    <property type="match status" value="1"/>
</dbReference>
<dbReference type="PROSITE" id="PS00262">
    <property type="entry name" value="INSULIN"/>
    <property type="match status" value="1"/>
</dbReference>
<gene>
    <name type="primary">BBXB2</name>
</gene>